<name>KCY_PARM1</name>
<gene>
    <name evidence="1" type="primary">cmk</name>
    <name type="ordered locus">amb4262</name>
</gene>
<proteinExistence type="inferred from homology"/>
<reference key="1">
    <citation type="journal article" date="2005" name="DNA Res.">
        <title>Complete genome sequence of the facultative anaerobic magnetotactic bacterium Magnetospirillum sp. strain AMB-1.</title>
        <authorList>
            <person name="Matsunaga T."/>
            <person name="Okamura Y."/>
            <person name="Fukuda Y."/>
            <person name="Wahyudi A.T."/>
            <person name="Murase Y."/>
            <person name="Takeyama H."/>
        </authorList>
    </citation>
    <scope>NUCLEOTIDE SEQUENCE [LARGE SCALE GENOMIC DNA]</scope>
    <source>
        <strain>ATCC 700264 / AMB-1</strain>
    </source>
</reference>
<sequence length="211" mass="22094">MSTIIAIDGPAAAGKGTLARRLAAELGFDYLDTGLIYRAVGMKLARAGLDPADVALAERAARQLSPDDLAATDLRIDEAAQAASKVASIPGVRAALLDFQRRFAATPPGGKGAVLDGRDIGTVVCPEAQVKLFVTASVEKRAERRLKELQEKGLGAIYGTVLADMRERDERDTNRAVAPLVPAQDAAVLDTSDLDADQAFAAALGIIGSKR</sequence>
<feature type="chain" id="PRO_1000048232" description="Cytidylate kinase">
    <location>
        <begin position="1"/>
        <end position="211"/>
    </location>
</feature>
<feature type="binding site" evidence="1">
    <location>
        <begin position="9"/>
        <end position="17"/>
    </location>
    <ligand>
        <name>ATP</name>
        <dbReference type="ChEBI" id="CHEBI:30616"/>
    </ligand>
</feature>
<dbReference type="EC" id="2.7.4.25" evidence="1"/>
<dbReference type="EMBL" id="AP007255">
    <property type="protein sequence ID" value="BAE53066.1"/>
    <property type="molecule type" value="Genomic_DNA"/>
</dbReference>
<dbReference type="RefSeq" id="WP_011386610.1">
    <property type="nucleotide sequence ID" value="NC_007626.1"/>
</dbReference>
<dbReference type="SMR" id="Q2VZA9"/>
<dbReference type="STRING" id="342108.amb4262"/>
<dbReference type="KEGG" id="mag:amb4262"/>
<dbReference type="HOGENOM" id="CLU_079959_0_1_5"/>
<dbReference type="OrthoDB" id="9807434at2"/>
<dbReference type="Proteomes" id="UP000007058">
    <property type="component" value="Chromosome"/>
</dbReference>
<dbReference type="GO" id="GO:0005737">
    <property type="term" value="C:cytoplasm"/>
    <property type="evidence" value="ECO:0007669"/>
    <property type="project" value="UniProtKB-SubCell"/>
</dbReference>
<dbReference type="GO" id="GO:0005524">
    <property type="term" value="F:ATP binding"/>
    <property type="evidence" value="ECO:0007669"/>
    <property type="project" value="UniProtKB-UniRule"/>
</dbReference>
<dbReference type="GO" id="GO:0036430">
    <property type="term" value="F:CMP kinase activity"/>
    <property type="evidence" value="ECO:0007669"/>
    <property type="project" value="RHEA"/>
</dbReference>
<dbReference type="GO" id="GO:0036431">
    <property type="term" value="F:dCMP kinase activity"/>
    <property type="evidence" value="ECO:0007669"/>
    <property type="project" value="RHEA"/>
</dbReference>
<dbReference type="GO" id="GO:0006220">
    <property type="term" value="P:pyrimidine nucleotide metabolic process"/>
    <property type="evidence" value="ECO:0007669"/>
    <property type="project" value="UniProtKB-UniRule"/>
</dbReference>
<dbReference type="CDD" id="cd02020">
    <property type="entry name" value="CMPK"/>
    <property type="match status" value="1"/>
</dbReference>
<dbReference type="Gene3D" id="3.40.50.300">
    <property type="entry name" value="P-loop containing nucleotide triphosphate hydrolases"/>
    <property type="match status" value="1"/>
</dbReference>
<dbReference type="HAMAP" id="MF_00238">
    <property type="entry name" value="Cytidyl_kinase_type1"/>
    <property type="match status" value="1"/>
</dbReference>
<dbReference type="InterPro" id="IPR003136">
    <property type="entry name" value="Cytidylate_kin"/>
</dbReference>
<dbReference type="InterPro" id="IPR011994">
    <property type="entry name" value="Cytidylate_kinase_dom"/>
</dbReference>
<dbReference type="InterPro" id="IPR027417">
    <property type="entry name" value="P-loop_NTPase"/>
</dbReference>
<dbReference type="NCBIfam" id="TIGR00017">
    <property type="entry name" value="cmk"/>
    <property type="match status" value="1"/>
</dbReference>
<dbReference type="Pfam" id="PF02224">
    <property type="entry name" value="Cytidylate_kin"/>
    <property type="match status" value="1"/>
</dbReference>
<dbReference type="SUPFAM" id="SSF52540">
    <property type="entry name" value="P-loop containing nucleoside triphosphate hydrolases"/>
    <property type="match status" value="1"/>
</dbReference>
<accession>Q2VZA9</accession>
<keyword id="KW-0067">ATP-binding</keyword>
<keyword id="KW-0963">Cytoplasm</keyword>
<keyword id="KW-0418">Kinase</keyword>
<keyword id="KW-0547">Nucleotide-binding</keyword>
<keyword id="KW-0808">Transferase</keyword>
<evidence type="ECO:0000255" key="1">
    <source>
        <dbReference type="HAMAP-Rule" id="MF_00238"/>
    </source>
</evidence>
<comment type="catalytic activity">
    <reaction evidence="1">
        <text>CMP + ATP = CDP + ADP</text>
        <dbReference type="Rhea" id="RHEA:11600"/>
        <dbReference type="ChEBI" id="CHEBI:30616"/>
        <dbReference type="ChEBI" id="CHEBI:58069"/>
        <dbReference type="ChEBI" id="CHEBI:60377"/>
        <dbReference type="ChEBI" id="CHEBI:456216"/>
        <dbReference type="EC" id="2.7.4.25"/>
    </reaction>
</comment>
<comment type="catalytic activity">
    <reaction evidence="1">
        <text>dCMP + ATP = dCDP + ADP</text>
        <dbReference type="Rhea" id="RHEA:25094"/>
        <dbReference type="ChEBI" id="CHEBI:30616"/>
        <dbReference type="ChEBI" id="CHEBI:57566"/>
        <dbReference type="ChEBI" id="CHEBI:58593"/>
        <dbReference type="ChEBI" id="CHEBI:456216"/>
        <dbReference type="EC" id="2.7.4.25"/>
    </reaction>
</comment>
<comment type="subcellular location">
    <subcellularLocation>
        <location evidence="1">Cytoplasm</location>
    </subcellularLocation>
</comment>
<comment type="similarity">
    <text evidence="1">Belongs to the cytidylate kinase family. Type 1 subfamily.</text>
</comment>
<organism>
    <name type="scientific">Paramagnetospirillum magneticum (strain ATCC 700264 / AMB-1)</name>
    <name type="common">Magnetospirillum magneticum</name>
    <dbReference type="NCBI Taxonomy" id="342108"/>
    <lineage>
        <taxon>Bacteria</taxon>
        <taxon>Pseudomonadati</taxon>
        <taxon>Pseudomonadota</taxon>
        <taxon>Alphaproteobacteria</taxon>
        <taxon>Rhodospirillales</taxon>
        <taxon>Magnetospirillaceae</taxon>
        <taxon>Paramagnetospirillum</taxon>
    </lineage>
</organism>
<protein>
    <recommendedName>
        <fullName evidence="1">Cytidylate kinase</fullName>
        <shortName evidence="1">CK</shortName>
        <ecNumber evidence="1">2.7.4.25</ecNumber>
    </recommendedName>
    <alternativeName>
        <fullName evidence="1">Cytidine monophosphate kinase</fullName>
        <shortName evidence="1">CMP kinase</shortName>
    </alternativeName>
</protein>